<organism>
    <name type="scientific">Olivierus martensii</name>
    <name type="common">Manchurian scorpion</name>
    <name type="synonym">Mesobuthus martensii</name>
    <dbReference type="NCBI Taxonomy" id="34649"/>
    <lineage>
        <taxon>Eukaryota</taxon>
        <taxon>Metazoa</taxon>
        <taxon>Ecdysozoa</taxon>
        <taxon>Arthropoda</taxon>
        <taxon>Chelicerata</taxon>
        <taxon>Arachnida</taxon>
        <taxon>Scorpiones</taxon>
        <taxon>Buthida</taxon>
        <taxon>Buthoidea</taxon>
        <taxon>Buthidae</taxon>
        <taxon>Olivierus</taxon>
    </lineage>
</organism>
<sequence length="88" mass="9767">MKFFLIFLVIFPIMGVLGKKNGYAVDSSGKVSECLLNNYCNNICTKVYYATSGYCCLLSCYCFGLDDDKAVLKIKDATKSYCDVQIIG</sequence>
<proteinExistence type="evidence at protein level"/>
<reference key="1">
    <citation type="journal article" date="1999" name="Toxicon">
        <title>The cDNA sequence of an excitatory insect selective neurotoxin from the scorpion Buthus martensi Karsch.</title>
        <authorList>
            <person name="Xiong Y.-M."/>
            <person name="Ling M.-H."/>
            <person name="Lan Z.-D."/>
            <person name="Wang D.-C."/>
            <person name="Chi C.-W."/>
        </authorList>
    </citation>
    <scope>NUCLEOTIDE SEQUENCE [MRNA]</scope>
    <source>
        <tissue>Venom gland</tissue>
    </source>
</reference>
<reference key="2">
    <citation type="journal article" date="1994" name="Sci. China, Ser. B, Chem. Life Sci. Earth Sci.">
        <title>Amino acid sequence of an excitatory insect-selective toxin (BmK IT) from venom of the scorpion Buthus martensi Karsch.</title>
        <authorList>
            <person name="Ji Y.H."/>
            <person name="Mansuelle P."/>
            <person name="Xu K."/>
            <person name="Granier C."/>
            <person name="Kopeyan C."/>
            <person name="Terakawa S."/>
            <person name="Rochat H."/>
        </authorList>
    </citation>
    <scope>PROTEIN SEQUENCE OF 19-88</scope>
    <scope>SUBCELLULAR LOCATION</scope>
</reference>
<reference key="3">
    <citation type="journal article" date="2000" name="FEBS Lett.">
        <title>Sequence and electrophysiological characterization of two insect-selective excitatory toxins from the venom of the Chinese scorpion Buthus martensi.</title>
        <authorList>
            <person name="Escoubas P."/>
            <person name="Stankiewicz M."/>
            <person name="Takaoka T."/>
            <person name="Pelhate M."/>
            <person name="Romi-Lebrun R."/>
            <person name="Wu F.Q."/>
            <person name="Nakajima T."/>
        </authorList>
    </citation>
    <scope>PROTEIN SEQUENCE OF 19-88</scope>
    <scope>AMIDATION AT ILE-87</scope>
    <scope>FUNCTION</scope>
    <scope>TOXIC DOSE</scope>
    <scope>MASS SPECTROMETRY</scope>
    <source>
        <tissue>Venom</tissue>
    </source>
</reference>
<reference key="4">
    <citation type="submission" date="1998-03" db="EMBL/GenBank/DDBJ databases">
        <title>Cloning and sequencing of an excitatory insect-selective neurotoxin BmKIT cDNA from Buthus martensii Karsch.</title>
        <authorList>
            <person name="Liang A.H."/>
            <person name="Li X.L."/>
            <person name="Su Z.G."/>
            <person name="Wang W."/>
        </authorList>
    </citation>
    <scope>NUCLEOTIDE SEQUENCE [MRNA] OF 19-88</scope>
</reference>
<reference key="5">
    <citation type="journal article" date="2006" name="Biochem. Biophys. Res. Commun.">
        <title>NMR solution structure of BmK-betaIT, an excitatory scorpion beta-toxin without a 'hot spot' at the relevant position.</title>
        <authorList>
            <person name="Tong X."/>
            <person name="Yao J."/>
            <person name="He F."/>
            <person name="Chen X."/>
            <person name="Zheng X."/>
            <person name="Xie C."/>
            <person name="Wu G."/>
            <person name="Zhang N."/>
            <person name="Ding J."/>
            <person name="Wu H."/>
        </authorList>
    </citation>
    <scope>PROTEIN SEQUENCE OF 19-32</scope>
    <scope>STRUCTURE BY NMR OF 19-87</scope>
    <scope>DISULFIDE BONDS</scope>
    <scope>MASS SPECTROMETRY</scope>
    <source>
        <tissue>Venom</tissue>
    </source>
</reference>
<name>SIX1_OLIMR</name>
<evidence type="ECO:0000255" key="1">
    <source>
        <dbReference type="PROSITE-ProRule" id="PRU01210"/>
    </source>
</evidence>
<evidence type="ECO:0000269" key="2">
    <source>
    </source>
</evidence>
<evidence type="ECO:0000269" key="3">
    <source>
    </source>
</evidence>
<evidence type="ECO:0000269" key="4">
    <source>
    </source>
</evidence>
<evidence type="ECO:0000303" key="5">
    <source>
    </source>
</evidence>
<evidence type="ECO:0000303" key="6">
    <source>
    </source>
</evidence>
<evidence type="ECO:0000303" key="7">
    <source>
    </source>
</evidence>
<evidence type="ECO:0000305" key="8"/>
<evidence type="ECO:0000305" key="9">
    <source>
    </source>
</evidence>
<evidence type="ECO:0000305" key="10">
    <source>
    </source>
</evidence>
<evidence type="ECO:0000312" key="11">
    <source>
        <dbReference type="EMBL" id="AAC14130.1"/>
    </source>
</evidence>
<evidence type="ECO:0000312" key="12">
    <source>
        <dbReference type="EMBL" id="CAA76604.1"/>
    </source>
</evidence>
<evidence type="ECO:0007744" key="13">
    <source>
        <dbReference type="PDB" id="1WWN"/>
    </source>
</evidence>
<evidence type="ECO:0007829" key="14">
    <source>
        <dbReference type="PDB" id="1WWN"/>
    </source>
</evidence>
<feature type="signal peptide" evidence="2 4">
    <location>
        <begin position="1"/>
        <end position="18"/>
    </location>
</feature>
<feature type="chain" id="PRO_0000035200" description="Beta-insect excitatory toxin BmKIT1" evidence="2 4">
    <location>
        <begin position="19"/>
        <end position="87"/>
    </location>
</feature>
<feature type="domain" description="LCN-type CS-alpha/beta" evidence="1">
    <location>
        <begin position="20"/>
        <end position="83"/>
    </location>
</feature>
<feature type="modified residue" description="Isoleucine amide" evidence="9">
    <location>
        <position position="87"/>
    </location>
</feature>
<feature type="disulfide bond" evidence="3 13">
    <location>
        <begin position="34"/>
        <end position="55"/>
    </location>
</feature>
<feature type="disulfide bond" evidence="3 13">
    <location>
        <begin position="40"/>
        <end position="60"/>
    </location>
</feature>
<feature type="disulfide bond" evidence="3 13">
    <location>
        <begin position="44"/>
        <end position="62"/>
    </location>
</feature>
<feature type="disulfide bond" evidence="3 13">
    <location>
        <begin position="56"/>
        <end position="82"/>
    </location>
</feature>
<feature type="sequence conflict" description="In Ref. 4; CAA76604." evidence="8" ref="4">
    <original>I</original>
    <variation>N</variation>
    <location>
        <position position="87"/>
    </location>
</feature>
<feature type="strand" evidence="14">
    <location>
        <begin position="21"/>
        <end position="23"/>
    </location>
</feature>
<feature type="strand" evidence="14">
    <location>
        <begin position="25"/>
        <end position="29"/>
    </location>
</feature>
<feature type="helix" evidence="14">
    <location>
        <begin position="37"/>
        <end position="46"/>
    </location>
</feature>
<feature type="strand" evidence="14">
    <location>
        <begin position="51"/>
        <end position="56"/>
    </location>
</feature>
<feature type="strand" evidence="14">
    <location>
        <begin position="59"/>
        <end position="63"/>
    </location>
</feature>
<feature type="helix" evidence="14">
    <location>
        <begin position="76"/>
        <end position="81"/>
    </location>
</feature>
<feature type="turn" evidence="14">
    <location>
        <begin position="82"/>
        <end position="86"/>
    </location>
</feature>
<keyword id="KW-0002">3D-structure</keyword>
<keyword id="KW-0027">Amidation</keyword>
<keyword id="KW-0903">Direct protein sequencing</keyword>
<keyword id="KW-1015">Disulfide bond</keyword>
<keyword id="KW-0872">Ion channel impairing toxin</keyword>
<keyword id="KW-0528">Neurotoxin</keyword>
<keyword id="KW-0964">Secreted</keyword>
<keyword id="KW-0732">Signal</keyword>
<keyword id="KW-0800">Toxin</keyword>
<keyword id="KW-0738">Voltage-gated sodium channel impairing toxin</keyword>
<dbReference type="EMBL" id="AF057555">
    <property type="protein sequence ID" value="AAC14130.1"/>
    <property type="molecule type" value="mRNA"/>
</dbReference>
<dbReference type="EMBL" id="Y17050">
    <property type="protein sequence ID" value="CAA76604.1"/>
    <property type="molecule type" value="mRNA"/>
</dbReference>
<dbReference type="PDB" id="1WWN">
    <property type="method" value="NMR"/>
    <property type="chains" value="A=19-87"/>
</dbReference>
<dbReference type="PDBsum" id="1WWN"/>
<dbReference type="SMR" id="O61668"/>
<dbReference type="TCDB" id="8.B.1.1.5">
    <property type="family name" value="the long (4c-c) scorpion toxin (l-st) superfamily"/>
</dbReference>
<dbReference type="EvolutionaryTrace" id="O61668"/>
<dbReference type="GO" id="GO:0005576">
    <property type="term" value="C:extracellular region"/>
    <property type="evidence" value="ECO:0007669"/>
    <property type="project" value="UniProtKB-SubCell"/>
</dbReference>
<dbReference type="GO" id="GO:0019871">
    <property type="term" value="F:sodium channel inhibitor activity"/>
    <property type="evidence" value="ECO:0007669"/>
    <property type="project" value="InterPro"/>
</dbReference>
<dbReference type="GO" id="GO:0090729">
    <property type="term" value="F:toxin activity"/>
    <property type="evidence" value="ECO:0007669"/>
    <property type="project" value="UniProtKB-KW"/>
</dbReference>
<dbReference type="GO" id="GO:0006952">
    <property type="term" value="P:defense response"/>
    <property type="evidence" value="ECO:0007669"/>
    <property type="project" value="InterPro"/>
</dbReference>
<dbReference type="CDD" id="cd23106">
    <property type="entry name" value="neurotoxins_LC_scorpion"/>
    <property type="match status" value="1"/>
</dbReference>
<dbReference type="Gene3D" id="3.30.30.10">
    <property type="entry name" value="Knottin, scorpion toxin-like"/>
    <property type="match status" value="1"/>
</dbReference>
<dbReference type="InterPro" id="IPR044062">
    <property type="entry name" value="LCN-type_CS_alpha_beta_dom"/>
</dbReference>
<dbReference type="InterPro" id="IPR003614">
    <property type="entry name" value="Scorpion_toxin-like"/>
</dbReference>
<dbReference type="InterPro" id="IPR036574">
    <property type="entry name" value="Scorpion_toxin-like_sf"/>
</dbReference>
<dbReference type="InterPro" id="IPR002061">
    <property type="entry name" value="Scorpion_toxinL/defensin"/>
</dbReference>
<dbReference type="Pfam" id="PF00537">
    <property type="entry name" value="Toxin_3"/>
    <property type="match status" value="1"/>
</dbReference>
<dbReference type="SMART" id="SM00505">
    <property type="entry name" value="Knot1"/>
    <property type="match status" value="1"/>
</dbReference>
<dbReference type="SUPFAM" id="SSF57095">
    <property type="entry name" value="Scorpion toxin-like"/>
    <property type="match status" value="1"/>
</dbReference>
<dbReference type="PROSITE" id="PS51863">
    <property type="entry name" value="LCN_CSAB"/>
    <property type="match status" value="1"/>
</dbReference>
<protein>
    <recommendedName>
        <fullName>Beta-insect excitatory toxin BmKIT1</fullName>
    </recommendedName>
    <alternativeName>
        <fullName evidence="6">Bm32-VI</fullName>
    </alternativeName>
    <alternativeName>
        <fullName evidence="5">BmK IT1</fullName>
        <shortName evidence="7 11">BmK IT</shortName>
        <shortName evidence="12">BmKIT</shortName>
    </alternativeName>
    <alternativeName>
        <fullName>BmK-betaIT</fullName>
    </alternativeName>
</protein>
<comment type="function">
    <text evidence="2">Excitatory insect beta-toxins induce a spastic paralysis. They bind voltage-independently at site-4 of sodium channels (Nav) and shift the voltage of activation toward more negative potentials thereby affecting sodium channel activation and promoting spontaneous and repetitive firing. This toxin is active only on insects.</text>
</comment>
<comment type="subcellular location">
    <subcellularLocation>
        <location evidence="4">Secreted</location>
    </subcellularLocation>
</comment>
<comment type="tissue specificity">
    <text evidence="10">Expressed by the venom gland.</text>
</comment>
<comment type="domain">
    <text evidence="8">Has the structural arrangement of an alpha-helix connected to antiparallel beta-sheets by disulfide bonds (CS-alpha/beta).</text>
</comment>
<comment type="mass spectrometry" mass="7632.83" method="MALDI" evidence="2"/>
<comment type="mass spectrometry" mass="7634.0" method="Electrospray" evidence="3"/>
<comment type="toxic dose">
    <text evidence="2">PD(50) is 0.18 ng/mg of Gryllus bimaculatus crickets.</text>
</comment>
<comment type="similarity">
    <text evidence="8">Belongs to the long (4 C-C) scorpion toxin superfamily. Sodium channel inhibitor family. Beta subfamily.</text>
</comment>
<accession>O61668</accession>
<accession>O61995</accession>